<organism>
    <name type="scientific">Limosilactobacillus reuteri subsp. reuteri (strain JCM 1112)</name>
    <name type="common">Lactobacillus reuteri</name>
    <dbReference type="NCBI Taxonomy" id="557433"/>
    <lineage>
        <taxon>Bacteria</taxon>
        <taxon>Bacillati</taxon>
        <taxon>Bacillota</taxon>
        <taxon>Bacilli</taxon>
        <taxon>Lactobacillales</taxon>
        <taxon>Lactobacillaceae</taxon>
        <taxon>Limosilactobacillus</taxon>
    </lineage>
</organism>
<comment type="function">
    <text evidence="1">Catalyzes the transfer of a dimethylallyl group onto the adenine at position 37 in tRNAs that read codons beginning with uridine, leading to the formation of N6-(dimethylallyl)adenosine (i(6)A).</text>
</comment>
<comment type="catalytic activity">
    <reaction evidence="1">
        <text>adenosine(37) in tRNA + dimethylallyl diphosphate = N(6)-dimethylallyladenosine(37) in tRNA + diphosphate</text>
        <dbReference type="Rhea" id="RHEA:26482"/>
        <dbReference type="Rhea" id="RHEA-COMP:10162"/>
        <dbReference type="Rhea" id="RHEA-COMP:10375"/>
        <dbReference type="ChEBI" id="CHEBI:33019"/>
        <dbReference type="ChEBI" id="CHEBI:57623"/>
        <dbReference type="ChEBI" id="CHEBI:74411"/>
        <dbReference type="ChEBI" id="CHEBI:74415"/>
        <dbReference type="EC" id="2.5.1.75"/>
    </reaction>
</comment>
<comment type="cofactor">
    <cofactor evidence="1">
        <name>Mg(2+)</name>
        <dbReference type="ChEBI" id="CHEBI:18420"/>
    </cofactor>
</comment>
<comment type="subunit">
    <text evidence="1">Monomer.</text>
</comment>
<comment type="similarity">
    <text evidence="1">Belongs to the IPP transferase family.</text>
</comment>
<name>MIAA_LIMRJ</name>
<sequence length="307" mass="35203">MNKVIAIVGPTAVGKTALSIKLAHEFDGEVISGDSMQVYRRLDIGTAKVTPEEMGDVPHHLIDICNIEERFSAARFKKLADQKIDEIAQRNHLPIIAGGTGFYLQTLTDNLALGSDQFDQQTLDIRNHWKEVAEEKGAEYVWEQLNKLDPVASARIPKSNTRRVIRALEVIKKTGQLFSNQPHFKATNDFLLIGLTTDRPVLYDRINKRVDLMIQNGLLEEAKWLFDQGGEDLPAGKGIGYHELFPYFRGEISLDEAVEKIKQDSRHYAKRQLTWFRNKADTHWFDILRHPDDINQIKQFINDWLKK</sequence>
<dbReference type="EC" id="2.5.1.75" evidence="1"/>
<dbReference type="EMBL" id="AP007281">
    <property type="protein sequence ID" value="BAG25652.1"/>
    <property type="molecule type" value="Genomic_DNA"/>
</dbReference>
<dbReference type="RefSeq" id="WP_003668437.1">
    <property type="nucleotide sequence ID" value="NC_010609.1"/>
</dbReference>
<dbReference type="SMR" id="B2G870"/>
<dbReference type="KEGG" id="lrf:LAR_1136"/>
<dbReference type="HOGENOM" id="CLU_032616_0_1_9"/>
<dbReference type="GO" id="GO:0005524">
    <property type="term" value="F:ATP binding"/>
    <property type="evidence" value="ECO:0007669"/>
    <property type="project" value="UniProtKB-UniRule"/>
</dbReference>
<dbReference type="GO" id="GO:0052381">
    <property type="term" value="F:tRNA dimethylallyltransferase activity"/>
    <property type="evidence" value="ECO:0007669"/>
    <property type="project" value="UniProtKB-UniRule"/>
</dbReference>
<dbReference type="GO" id="GO:0006400">
    <property type="term" value="P:tRNA modification"/>
    <property type="evidence" value="ECO:0007669"/>
    <property type="project" value="TreeGrafter"/>
</dbReference>
<dbReference type="Gene3D" id="1.10.20.140">
    <property type="match status" value="1"/>
</dbReference>
<dbReference type="Gene3D" id="3.40.50.300">
    <property type="entry name" value="P-loop containing nucleotide triphosphate hydrolases"/>
    <property type="match status" value="1"/>
</dbReference>
<dbReference type="HAMAP" id="MF_00185">
    <property type="entry name" value="IPP_trans"/>
    <property type="match status" value="1"/>
</dbReference>
<dbReference type="InterPro" id="IPR039657">
    <property type="entry name" value="Dimethylallyltransferase"/>
</dbReference>
<dbReference type="InterPro" id="IPR018022">
    <property type="entry name" value="IPT"/>
</dbReference>
<dbReference type="InterPro" id="IPR027417">
    <property type="entry name" value="P-loop_NTPase"/>
</dbReference>
<dbReference type="NCBIfam" id="TIGR00174">
    <property type="entry name" value="miaA"/>
    <property type="match status" value="1"/>
</dbReference>
<dbReference type="PANTHER" id="PTHR11088">
    <property type="entry name" value="TRNA DIMETHYLALLYLTRANSFERASE"/>
    <property type="match status" value="1"/>
</dbReference>
<dbReference type="PANTHER" id="PTHR11088:SF60">
    <property type="entry name" value="TRNA DIMETHYLALLYLTRANSFERASE"/>
    <property type="match status" value="1"/>
</dbReference>
<dbReference type="Pfam" id="PF01715">
    <property type="entry name" value="IPPT"/>
    <property type="match status" value="1"/>
</dbReference>
<dbReference type="SUPFAM" id="SSF52540">
    <property type="entry name" value="P-loop containing nucleoside triphosphate hydrolases"/>
    <property type="match status" value="2"/>
</dbReference>
<reference key="1">
    <citation type="journal article" date="2008" name="DNA Res.">
        <title>Comparative genome analysis of Lactobacillus reuteri and Lactobacillus fermentum reveal a genomic island for reuterin and cobalamin production.</title>
        <authorList>
            <person name="Morita H."/>
            <person name="Toh H."/>
            <person name="Fukuda S."/>
            <person name="Horikawa H."/>
            <person name="Oshima K."/>
            <person name="Suzuki T."/>
            <person name="Murakami M."/>
            <person name="Hisamatsu S."/>
            <person name="Kato Y."/>
            <person name="Takizawa T."/>
            <person name="Fukuoka H."/>
            <person name="Yoshimura T."/>
            <person name="Itoh K."/>
            <person name="O'Sullivan D.J."/>
            <person name="McKay L.L."/>
            <person name="Ohno H."/>
            <person name="Kikuchi J."/>
            <person name="Masaoka T."/>
            <person name="Hattori M."/>
        </authorList>
    </citation>
    <scope>NUCLEOTIDE SEQUENCE [LARGE SCALE GENOMIC DNA]</scope>
    <source>
        <strain>JCM 1112</strain>
    </source>
</reference>
<evidence type="ECO:0000255" key="1">
    <source>
        <dbReference type="HAMAP-Rule" id="MF_00185"/>
    </source>
</evidence>
<gene>
    <name evidence="1" type="primary">miaA</name>
    <name type="ordered locus">LAR_1136</name>
</gene>
<accession>B2G870</accession>
<feature type="chain" id="PRO_1000098669" description="tRNA dimethylallyltransferase">
    <location>
        <begin position="1"/>
        <end position="307"/>
    </location>
</feature>
<feature type="region of interest" description="Interaction with substrate tRNA" evidence="1">
    <location>
        <begin position="34"/>
        <end position="37"/>
    </location>
</feature>
<feature type="binding site" evidence="1">
    <location>
        <begin position="9"/>
        <end position="16"/>
    </location>
    <ligand>
        <name>ATP</name>
        <dbReference type="ChEBI" id="CHEBI:30616"/>
    </ligand>
</feature>
<feature type="binding site" evidence="1">
    <location>
        <begin position="11"/>
        <end position="16"/>
    </location>
    <ligand>
        <name>substrate</name>
    </ligand>
</feature>
<feature type="site" description="Interaction with substrate tRNA" evidence="1">
    <location>
        <position position="100"/>
    </location>
</feature>
<feature type="site" description="Interaction with substrate tRNA" evidence="1">
    <location>
        <position position="126"/>
    </location>
</feature>
<proteinExistence type="inferred from homology"/>
<protein>
    <recommendedName>
        <fullName evidence="1">tRNA dimethylallyltransferase</fullName>
        <ecNumber evidence="1">2.5.1.75</ecNumber>
    </recommendedName>
    <alternativeName>
        <fullName evidence="1">Dimethylallyl diphosphate:tRNA dimethylallyltransferase</fullName>
        <shortName evidence="1">DMAPP:tRNA dimethylallyltransferase</shortName>
        <shortName evidence="1">DMATase</shortName>
    </alternativeName>
    <alternativeName>
        <fullName evidence="1">Isopentenyl-diphosphate:tRNA isopentenyltransferase</fullName>
        <shortName evidence="1">IPP transferase</shortName>
        <shortName evidence="1">IPPT</shortName>
        <shortName evidence="1">IPTase</shortName>
    </alternativeName>
</protein>
<keyword id="KW-0067">ATP-binding</keyword>
<keyword id="KW-0460">Magnesium</keyword>
<keyword id="KW-0547">Nucleotide-binding</keyword>
<keyword id="KW-0808">Transferase</keyword>
<keyword id="KW-0819">tRNA processing</keyword>